<accession>Q65ML7</accession>
<accession>Q62Y11</accession>
<protein>
    <recommendedName>
        <fullName evidence="1">GTP cyclohydrolase FolE2</fullName>
        <ecNumber evidence="1">3.5.4.16</ecNumber>
    </recommendedName>
</protein>
<keyword id="KW-0378">Hydrolase</keyword>
<keyword id="KW-1185">Reference proteome</keyword>
<feature type="chain" id="PRO_0000147700" description="GTP cyclohydrolase FolE2">
    <location>
        <begin position="1"/>
        <end position="300"/>
    </location>
</feature>
<feature type="site" description="May be catalytically important" evidence="1">
    <location>
        <position position="183"/>
    </location>
</feature>
<comment type="function">
    <text evidence="1">Converts GTP to 7,8-dihydroneopterin triphosphate.</text>
</comment>
<comment type="catalytic activity">
    <reaction evidence="1">
        <text>GTP + H2O = 7,8-dihydroneopterin 3'-triphosphate + formate + H(+)</text>
        <dbReference type="Rhea" id="RHEA:17473"/>
        <dbReference type="ChEBI" id="CHEBI:15377"/>
        <dbReference type="ChEBI" id="CHEBI:15378"/>
        <dbReference type="ChEBI" id="CHEBI:15740"/>
        <dbReference type="ChEBI" id="CHEBI:37565"/>
        <dbReference type="ChEBI" id="CHEBI:58462"/>
        <dbReference type="EC" id="3.5.4.16"/>
    </reaction>
</comment>
<comment type="pathway">
    <text evidence="1">Cofactor biosynthesis; 7,8-dihydroneopterin triphosphate biosynthesis; 7,8-dihydroneopterin triphosphate from GTP: step 1/1.</text>
</comment>
<comment type="similarity">
    <text evidence="1">Belongs to the GTP cyclohydrolase IV family.</text>
</comment>
<dbReference type="EC" id="3.5.4.16" evidence="1"/>
<dbReference type="EMBL" id="AE017333">
    <property type="protein sequence ID" value="AAU39697.1"/>
    <property type="molecule type" value="Genomic_DNA"/>
</dbReference>
<dbReference type="EMBL" id="CP000002">
    <property type="protein sequence ID" value="AAU22347.1"/>
    <property type="molecule type" value="Genomic_DNA"/>
</dbReference>
<dbReference type="RefSeq" id="WP_003179674.1">
    <property type="nucleotide sequence ID" value="NC_006322.1"/>
</dbReference>
<dbReference type="SMR" id="Q65ML7"/>
<dbReference type="STRING" id="279010.BL02349"/>
<dbReference type="GeneID" id="92862657"/>
<dbReference type="KEGG" id="bld:BLi00762"/>
<dbReference type="KEGG" id="bli:BL02349"/>
<dbReference type="eggNOG" id="COG1469">
    <property type="taxonomic scope" value="Bacteria"/>
</dbReference>
<dbReference type="HOGENOM" id="CLU_062816_1_1_9"/>
<dbReference type="UniPathway" id="UPA00848">
    <property type="reaction ID" value="UER00151"/>
</dbReference>
<dbReference type="Proteomes" id="UP000000606">
    <property type="component" value="Chromosome"/>
</dbReference>
<dbReference type="GO" id="GO:0003934">
    <property type="term" value="F:GTP cyclohydrolase I activity"/>
    <property type="evidence" value="ECO:0007669"/>
    <property type="project" value="UniProtKB-UniRule"/>
</dbReference>
<dbReference type="GO" id="GO:0046654">
    <property type="term" value="P:tetrahydrofolate biosynthetic process"/>
    <property type="evidence" value="ECO:0007669"/>
    <property type="project" value="UniProtKB-UniRule"/>
</dbReference>
<dbReference type="Gene3D" id="3.10.270.10">
    <property type="entry name" value="Urate Oxidase"/>
    <property type="match status" value="1"/>
</dbReference>
<dbReference type="HAMAP" id="MF_01527_B">
    <property type="entry name" value="GTP_cyclohydrol_B"/>
    <property type="match status" value="1"/>
</dbReference>
<dbReference type="InterPro" id="IPR022838">
    <property type="entry name" value="GTP_cyclohydrolase_FolE2"/>
</dbReference>
<dbReference type="InterPro" id="IPR003801">
    <property type="entry name" value="GTP_cyclohydrolase_FolE2/MptA"/>
</dbReference>
<dbReference type="NCBIfam" id="NF010200">
    <property type="entry name" value="PRK13674.1-1"/>
    <property type="match status" value="1"/>
</dbReference>
<dbReference type="PANTHER" id="PTHR36445">
    <property type="entry name" value="GTP CYCLOHYDROLASE MPTA"/>
    <property type="match status" value="1"/>
</dbReference>
<dbReference type="PANTHER" id="PTHR36445:SF1">
    <property type="entry name" value="GTP CYCLOHYDROLASE MPTA"/>
    <property type="match status" value="1"/>
</dbReference>
<dbReference type="Pfam" id="PF02649">
    <property type="entry name" value="GCHY-1"/>
    <property type="match status" value="1"/>
</dbReference>
<reference key="1">
    <citation type="journal article" date="2004" name="J. Mol. Microbiol. Biotechnol.">
        <title>The complete genome sequence of Bacillus licheniformis DSM13, an organism with great industrial potential.</title>
        <authorList>
            <person name="Veith B."/>
            <person name="Herzberg C."/>
            <person name="Steckel S."/>
            <person name="Feesche J."/>
            <person name="Maurer K.H."/>
            <person name="Ehrenreich P."/>
            <person name="Baeumer S."/>
            <person name="Henne A."/>
            <person name="Liesegang H."/>
            <person name="Merkl R."/>
            <person name="Ehrenreich A."/>
            <person name="Gottschalk G."/>
        </authorList>
    </citation>
    <scope>NUCLEOTIDE SEQUENCE [LARGE SCALE GENOMIC DNA]</scope>
    <source>
        <strain>ATCC 14580 / DSM 13 / JCM 2505 / CCUG 7422 / NBRC 12200 / NCIMB 9375 / NCTC 10341 / NRRL NRS-1264 / Gibson 46</strain>
    </source>
</reference>
<reference key="2">
    <citation type="journal article" date="2004" name="Genome Biol.">
        <title>Complete genome sequence of the industrial bacterium Bacillus licheniformis and comparisons with closely related Bacillus species.</title>
        <authorList>
            <person name="Rey M.W."/>
            <person name="Ramaiya P."/>
            <person name="Nelson B.A."/>
            <person name="Brody-Karpin S.D."/>
            <person name="Zaretsky E.J."/>
            <person name="Tang M."/>
            <person name="Lopez de Leon A."/>
            <person name="Xiang H."/>
            <person name="Gusti V."/>
            <person name="Clausen I.G."/>
            <person name="Olsen P.B."/>
            <person name="Rasmussen M.D."/>
            <person name="Andersen J.T."/>
            <person name="Joergensen P.L."/>
            <person name="Larsen T.S."/>
            <person name="Sorokin A."/>
            <person name="Bolotin A."/>
            <person name="Lapidus A."/>
            <person name="Galleron N."/>
            <person name="Ehrlich S.D."/>
            <person name="Berka R.M."/>
        </authorList>
    </citation>
    <scope>NUCLEOTIDE SEQUENCE [LARGE SCALE GENOMIC DNA]</scope>
    <source>
        <strain>ATCC 14580 / DSM 13 / JCM 2505 / CCUG 7422 / NBRC 12200 / NCIMB 9375 / NCTC 10341 / NRRL NRS-1264 / Gibson 46</strain>
    </source>
</reference>
<proteinExistence type="inferred from homology"/>
<gene>
    <name evidence="1" type="primary">folE2</name>
    <name type="ordered locus">BLi00762</name>
    <name type="ordered locus">BL02349</name>
</gene>
<evidence type="ECO:0000255" key="1">
    <source>
        <dbReference type="HAMAP-Rule" id="MF_01527"/>
    </source>
</evidence>
<organism>
    <name type="scientific">Bacillus licheniformis (strain ATCC 14580 / DSM 13 / JCM 2505 / CCUG 7422 / NBRC 12200 / NCIMB 9375 / NCTC 10341 / NRRL NRS-1264 / Gibson 46)</name>
    <dbReference type="NCBI Taxonomy" id="279010"/>
    <lineage>
        <taxon>Bacteria</taxon>
        <taxon>Bacillati</taxon>
        <taxon>Bacillota</taxon>
        <taxon>Bacilli</taxon>
        <taxon>Bacillales</taxon>
        <taxon>Bacillaceae</taxon>
        <taxon>Bacillus</taxon>
    </lineage>
</organism>
<name>GCH4_BACLD</name>
<sequence>MERKLHLPAKPERHRRFGSVEAVKGIKPTDKEQMKDIQNTPNDYFFDIDHVGVSNVSHPILIASSLKPFTQTTIGAFSFTTSLARDRKGINMSRLTEQLQRYHEANWTVDFHTLKDFAKDLAGNMEQESASVSVSFPWYFERISPETKLSGLMHADIHMTVSYHENKGFSQTAGITAHATTLCPCSKEISEYSAHNQRGIIKITAHINEQAEMPDDFKAELLAAAETNASAKLHPVLKRPDEKRVTEQAYENPRFVEDVLRLTAADLYEMDWISAFEIECRNEESIHLHDAVARLSFSKC</sequence>